<name>S31G1_HUMAN</name>
<proteinExistence type="evidence at protein level"/>
<evidence type="ECO:0000250" key="1">
    <source>
        <dbReference type="UniProtKB" id="Q3V0E1"/>
    </source>
</evidence>
<evidence type="ECO:0000256" key="2">
    <source>
        <dbReference type="SAM" id="MobiDB-lite"/>
    </source>
</evidence>
<evidence type="ECO:0000269" key="3">
    <source>
    </source>
</evidence>
<evidence type="ECO:0000269" key="4">
    <source>
    </source>
</evidence>
<evidence type="ECO:0000305" key="5"/>
<evidence type="ECO:0000312" key="6">
    <source>
        <dbReference type="HGNC" id="HGNC:31418"/>
    </source>
</evidence>
<keyword id="KW-0025">Alternative splicing</keyword>
<keyword id="KW-1267">Proteomics identification</keyword>
<keyword id="KW-1185">Reference proteome</keyword>
<sequence>MEWLLEDLLGAKGDMGLLWGQLTHALACRHCGSSCFQSPGNLVTLFLFVVWQIQRWWQLGRLRQLHPWCSGNMVQGKELPLLHRVAFLDHLCKQKSEVEEEGEEEEEGEDEASLDPLKPCSPTKEAPTGEQATPAPPQPSCGSEGLLKAIGIPEQTVMQPVSPSRSFPIFQILTSFPVRHKIASGNRQQQRKSQLFWGLPSLHSESLEAIFLSSGGPSPLKWSVCSSVFFNKLAFLPRSNLLLPQYHSSAQFSTHGAHTMEDLEGMAPDPQLLPPPSSPSVSSLLLHLRPFPVDHKGVLSGAEAPTQSPGTSPLEVLPGYETHLETTGHKKMPQAFEPPMPPPCQSPASLSEPRKVSPEGGLAISKDFWGTVGYREKPQASESSMPVPCPPLDSLPELQRESSLEDPSRYKPQWECRENSGNLWAFESPVLDLNPELSGTSPECVPPASETPWKGMQSRENIWVPADPVSPPSLPSVPLLESLVMGPQGVLSESKALWETMGQKENLWASDSPDPVHSTPPTTLMEPHRINPGECLATSEATWKDTEHSRNSSASRSPSLALSPPPALAPELLRVRSMGVLSDSEARCGDIQKTKNSWASKHPACNLPQDLHGASPLGVLSDSQSIVGEMEQKENCVPVFPGRGSSPSSNSVSKSHVSEPIADQSNYKPDGEAVEQRKNHWATELPAPSSLSTPLPEPHIDLELVWRNVQQREVPQGPSPLAVDPLHPVPQPPTLAEAVKIERTHPGLPKGVTCPGVKAEAPLSQRWTVPELLTHPGIHAWQWSRELKLRLKKLRQSPASRAPGPSQSFCSSPILSSTIPDFWGLPSCPPQQIYPPNPCPHSSSCHPQEVQRTVPQPVQSSHCHHFQSSSQLQPQESGRAEQGSQRGEKMKGKMVSQVPSQGPCVHMEAGVDYLSPGPGEPSNSKVLVSGKRKDKASASSSAKKREHPRKPKAGDHRRGTARLGLSTVTGKNHPAQARSLVEAPVSTFPQRSQHRGQSSQHTALPQLLLPKASGPQDQPEAGRRASDILTPRHCKHCPWAHMEKYLSFPTLKASLTRGLQKVLAKCLDNHRPLPTKSSQ</sequence>
<gene>
    <name evidence="6" type="primary">SPATA31G1</name>
    <name type="synonym">C9orf131</name>
</gene>
<reference key="1">
    <citation type="journal article" date="2004" name="Nature">
        <title>DNA sequence and analysis of human chromosome 9.</title>
        <authorList>
            <person name="Humphray S.J."/>
            <person name="Oliver K."/>
            <person name="Hunt A.R."/>
            <person name="Plumb R.W."/>
            <person name="Loveland J.E."/>
            <person name="Howe K.L."/>
            <person name="Andrews T.D."/>
            <person name="Searle S."/>
            <person name="Hunt S.E."/>
            <person name="Scott C.E."/>
            <person name="Jones M.C."/>
            <person name="Ainscough R."/>
            <person name="Almeida J.P."/>
            <person name="Ambrose K.D."/>
            <person name="Ashwell R.I.S."/>
            <person name="Babbage A.K."/>
            <person name="Babbage S."/>
            <person name="Bagguley C.L."/>
            <person name="Bailey J."/>
            <person name="Banerjee R."/>
            <person name="Barker D.J."/>
            <person name="Barlow K.F."/>
            <person name="Bates K."/>
            <person name="Beasley H."/>
            <person name="Beasley O."/>
            <person name="Bird C.P."/>
            <person name="Bray-Allen S."/>
            <person name="Brown A.J."/>
            <person name="Brown J.Y."/>
            <person name="Burford D."/>
            <person name="Burrill W."/>
            <person name="Burton J."/>
            <person name="Carder C."/>
            <person name="Carter N.P."/>
            <person name="Chapman J.C."/>
            <person name="Chen Y."/>
            <person name="Clarke G."/>
            <person name="Clark S.Y."/>
            <person name="Clee C.M."/>
            <person name="Clegg S."/>
            <person name="Collier R.E."/>
            <person name="Corby N."/>
            <person name="Crosier M."/>
            <person name="Cummings A.T."/>
            <person name="Davies J."/>
            <person name="Dhami P."/>
            <person name="Dunn M."/>
            <person name="Dutta I."/>
            <person name="Dyer L.W."/>
            <person name="Earthrowl M.E."/>
            <person name="Faulkner L."/>
            <person name="Fleming C.J."/>
            <person name="Frankish A."/>
            <person name="Frankland J.A."/>
            <person name="French L."/>
            <person name="Fricker D.G."/>
            <person name="Garner P."/>
            <person name="Garnett J."/>
            <person name="Ghori J."/>
            <person name="Gilbert J.G.R."/>
            <person name="Glison C."/>
            <person name="Grafham D.V."/>
            <person name="Gribble S."/>
            <person name="Griffiths C."/>
            <person name="Griffiths-Jones S."/>
            <person name="Grocock R."/>
            <person name="Guy J."/>
            <person name="Hall R.E."/>
            <person name="Hammond S."/>
            <person name="Harley J.L."/>
            <person name="Harrison E.S.I."/>
            <person name="Hart E.A."/>
            <person name="Heath P.D."/>
            <person name="Henderson C.D."/>
            <person name="Hopkins B.L."/>
            <person name="Howard P.J."/>
            <person name="Howden P.J."/>
            <person name="Huckle E."/>
            <person name="Johnson C."/>
            <person name="Johnson D."/>
            <person name="Joy A.A."/>
            <person name="Kay M."/>
            <person name="Keenan S."/>
            <person name="Kershaw J.K."/>
            <person name="Kimberley A.M."/>
            <person name="King A."/>
            <person name="Knights A."/>
            <person name="Laird G.K."/>
            <person name="Langford C."/>
            <person name="Lawlor S."/>
            <person name="Leongamornlert D.A."/>
            <person name="Leversha M."/>
            <person name="Lloyd C."/>
            <person name="Lloyd D.M."/>
            <person name="Lovell J."/>
            <person name="Martin S."/>
            <person name="Mashreghi-Mohammadi M."/>
            <person name="Matthews L."/>
            <person name="McLaren S."/>
            <person name="McLay K.E."/>
            <person name="McMurray A."/>
            <person name="Milne S."/>
            <person name="Nickerson T."/>
            <person name="Nisbett J."/>
            <person name="Nordsiek G."/>
            <person name="Pearce A.V."/>
            <person name="Peck A.I."/>
            <person name="Porter K.M."/>
            <person name="Pandian R."/>
            <person name="Pelan S."/>
            <person name="Phillimore B."/>
            <person name="Povey S."/>
            <person name="Ramsey Y."/>
            <person name="Rand V."/>
            <person name="Scharfe M."/>
            <person name="Sehra H.K."/>
            <person name="Shownkeen R."/>
            <person name="Sims S.K."/>
            <person name="Skuce C.D."/>
            <person name="Smith M."/>
            <person name="Steward C.A."/>
            <person name="Swarbreck D."/>
            <person name="Sycamore N."/>
            <person name="Tester J."/>
            <person name="Thorpe A."/>
            <person name="Tracey A."/>
            <person name="Tromans A."/>
            <person name="Thomas D.W."/>
            <person name="Wall M."/>
            <person name="Wallis J.M."/>
            <person name="West A.P."/>
            <person name="Whitehead S.L."/>
            <person name="Willey D.L."/>
            <person name="Williams S.A."/>
            <person name="Wilming L."/>
            <person name="Wray P.W."/>
            <person name="Young L."/>
            <person name="Ashurst J.L."/>
            <person name="Coulson A."/>
            <person name="Blocker H."/>
            <person name="Durbin R.M."/>
            <person name="Sulston J.E."/>
            <person name="Hubbard T."/>
            <person name="Jackson M.J."/>
            <person name="Bentley D.R."/>
            <person name="Beck S."/>
            <person name="Rogers J."/>
            <person name="Dunham I."/>
        </authorList>
    </citation>
    <scope>NUCLEOTIDE SEQUENCE [LARGE SCALE GENOMIC DNA]</scope>
</reference>
<reference key="2">
    <citation type="journal article" date="2004" name="Genome Res.">
        <title>The status, quality, and expansion of the NIH full-length cDNA project: the Mammalian Gene Collection (MGC).</title>
        <authorList>
            <consortium name="The MGC Project Team"/>
        </authorList>
    </citation>
    <scope>NUCLEOTIDE SEQUENCE [LARGE SCALE MRNA] (ISOFORM 1)</scope>
    <scope>VARIANT LEU-222</scope>
    <source>
        <tissue>Testis</tissue>
    </source>
</reference>
<reference key="3">
    <citation type="journal article" date="2007" name="BMC Genomics">
        <title>The full-ORF clone resource of the German cDNA consortium.</title>
        <authorList>
            <person name="Bechtel S."/>
            <person name="Rosenfelder H."/>
            <person name="Duda A."/>
            <person name="Schmidt C.P."/>
            <person name="Ernst U."/>
            <person name="Wellenreuther R."/>
            <person name="Mehrle A."/>
            <person name="Schuster C."/>
            <person name="Bahr A."/>
            <person name="Bloecker H."/>
            <person name="Heubner D."/>
            <person name="Hoerlein A."/>
            <person name="Michel G."/>
            <person name="Wedler H."/>
            <person name="Koehrer K."/>
            <person name="Ottenwaelder B."/>
            <person name="Poustka A."/>
            <person name="Wiemann S."/>
            <person name="Schupp I."/>
        </authorList>
    </citation>
    <scope>NUCLEOTIDE SEQUENCE [LARGE SCALE MRNA] OF 929-1079 (ISOFORM 1)</scope>
    <source>
        <tissue>Testis</tissue>
    </source>
</reference>
<reference key="4">
    <citation type="journal article" date="2023" name="Dev. Biol.">
        <title>C9orf131 and C10orf120 are not essential for male fertility in humans or mice.</title>
        <authorList>
            <person name="He J."/>
            <person name="Su L."/>
            <person name="Wang W."/>
            <person name="Li Y."/>
            <person name="Meng L."/>
            <person name="Tan C."/>
            <person name="Lin G."/>
            <person name="Tan Y.Q."/>
            <person name="Zhang Q."/>
            <person name="Tu C."/>
        </authorList>
    </citation>
    <scope>INVOLVEMENT IN ASTHENOZOOSPERMIA</scope>
    <scope>VARIANT 1023-ARG--GLN-1079 DEL</scope>
</reference>
<feature type="chain" id="PRO_0000294443" description="Spermatogenesis-associated protein 31G1">
    <location>
        <begin position="1"/>
        <end position="1079"/>
    </location>
</feature>
<feature type="region of interest" description="Disordered" evidence="2">
    <location>
        <begin position="97"/>
        <end position="145"/>
    </location>
</feature>
<feature type="region of interest" description="Disordered" evidence="2">
    <location>
        <begin position="261"/>
        <end position="281"/>
    </location>
</feature>
<feature type="region of interest" description="Disordered" evidence="2">
    <location>
        <begin position="297"/>
        <end position="317"/>
    </location>
</feature>
<feature type="region of interest" description="Disordered" evidence="2">
    <location>
        <begin position="331"/>
        <end position="362"/>
    </location>
</feature>
<feature type="region of interest" description="Disordered" evidence="2">
    <location>
        <begin position="376"/>
        <end position="412"/>
    </location>
</feature>
<feature type="region of interest" description="Disordered" evidence="2">
    <location>
        <begin position="506"/>
        <end position="566"/>
    </location>
</feature>
<feature type="region of interest" description="Disordered" evidence="2">
    <location>
        <begin position="637"/>
        <end position="678"/>
    </location>
</feature>
<feature type="region of interest" description="Disordered" evidence="2">
    <location>
        <begin position="840"/>
        <end position="975"/>
    </location>
</feature>
<feature type="compositionally biased region" description="Acidic residues" evidence="2">
    <location>
        <begin position="98"/>
        <end position="113"/>
    </location>
</feature>
<feature type="compositionally biased region" description="Pro residues" evidence="2">
    <location>
        <begin position="336"/>
        <end position="345"/>
    </location>
</feature>
<feature type="compositionally biased region" description="Basic and acidic residues" evidence="2">
    <location>
        <begin position="398"/>
        <end position="412"/>
    </location>
</feature>
<feature type="compositionally biased region" description="Low complexity" evidence="2">
    <location>
        <begin position="551"/>
        <end position="562"/>
    </location>
</feature>
<feature type="compositionally biased region" description="Low complexity" evidence="2">
    <location>
        <begin position="645"/>
        <end position="655"/>
    </location>
</feature>
<feature type="compositionally biased region" description="Basic and acidic residues" evidence="2">
    <location>
        <begin position="669"/>
        <end position="678"/>
    </location>
</feature>
<feature type="compositionally biased region" description="Basic residues" evidence="2">
    <location>
        <begin position="942"/>
        <end position="951"/>
    </location>
</feature>
<feature type="splice variant" id="VSP_046225" description="In isoform 3." evidence="5">
    <original>MEWLLEDLLGAKGDMGLLWGQLTHALACRHCGSSCFQSPGNLVTLFLFVVWQIQRWWQLGRLRQLHPWCSGNMVQG</original>
    <variation>MLR</variation>
    <location>
        <begin position="1"/>
        <end position="76"/>
    </location>
</feature>
<feature type="splice variant" id="VSP_046224" description="In isoform 2." evidence="5">
    <original>MEWLLEDLLGAKGDMGLLWGQLTHALACRHCGSSCFQSPGNLVTLFLFVVWQ</original>
    <variation>MLRK</variation>
    <location>
        <begin position="1"/>
        <end position="52"/>
    </location>
</feature>
<feature type="sequence variant" id="VAR_047239" description="In dbSNP:rs615474." evidence="3">
    <original>W</original>
    <variation>L</variation>
    <location>
        <position position="222"/>
    </location>
</feature>
<feature type="sequence variant" id="VAR_047240" description="In dbSNP:rs10117097.">
    <original>L</original>
    <variation>F</variation>
    <location>
        <position position="285"/>
    </location>
</feature>
<feature type="sequence variant" id="VAR_047241" description="In dbSNP:rs35523761.">
    <original>L</original>
    <variation>V</variation>
    <location>
        <position position="437"/>
    </location>
</feature>
<feature type="sequence variant" id="VAR_047242" description="In dbSNP:rs2298312.">
    <original>S</original>
    <variation>T</variation>
    <location>
        <position position="623"/>
    </location>
</feature>
<feature type="sequence variant" id="VAR_047243" description="In dbSNP:rs3739871.">
    <original>P</original>
    <variation>S</variation>
    <location>
        <position position="916"/>
    </location>
</feature>
<feature type="sequence variant" id="VAR_088336" description="Found in a patient with asthenozoospermia; uncertain significance." evidence="4">
    <location>
        <begin position="1023"/>
        <end position="1079"/>
    </location>
</feature>
<feature type="sequence conflict" description="In Ref. 2; AAH45643." evidence="5" ref="2">
    <original>S</original>
    <variation>Y</variation>
    <location>
        <position position="218"/>
    </location>
</feature>
<comment type="function">
    <text evidence="1">Dispensable for normal development and fertility.</text>
</comment>
<comment type="alternative products">
    <event type="alternative splicing"/>
    <isoform>
        <id>Q5VYM1-1</id>
        <name>1</name>
        <sequence type="displayed"/>
    </isoform>
    <isoform>
        <id>Q5VYM1-2</id>
        <name>2</name>
        <name evidence="5">D</name>
        <sequence type="described" ref="VSP_046224"/>
    </isoform>
    <isoform>
        <id>Q5VYM1-3</id>
        <name>3</name>
        <sequence type="described" ref="VSP_046225"/>
    </isoform>
</comment>
<comment type="caution">
    <text evidence="5">It is uncertain whether Met-1 or Met-15 is the initiator.</text>
</comment>
<comment type="sequence caution" evidence="5">
    <conflict type="erroneous initiation">
        <sequence resource="EMBL-CDS" id="AAH45643"/>
    </conflict>
    <text>Truncated N-terminus.</text>
</comment>
<organism>
    <name type="scientific">Homo sapiens</name>
    <name type="common">Human</name>
    <dbReference type="NCBI Taxonomy" id="9606"/>
    <lineage>
        <taxon>Eukaryota</taxon>
        <taxon>Metazoa</taxon>
        <taxon>Chordata</taxon>
        <taxon>Craniata</taxon>
        <taxon>Vertebrata</taxon>
        <taxon>Euteleostomi</taxon>
        <taxon>Mammalia</taxon>
        <taxon>Eutheria</taxon>
        <taxon>Euarchontoglires</taxon>
        <taxon>Primates</taxon>
        <taxon>Haplorrhini</taxon>
        <taxon>Catarrhini</taxon>
        <taxon>Hominidae</taxon>
        <taxon>Homo</taxon>
    </lineage>
</organism>
<dbReference type="EMBL" id="AL353795">
    <property type="status" value="NOT_ANNOTATED_CDS"/>
    <property type="molecule type" value="Genomic_DNA"/>
</dbReference>
<dbReference type="EMBL" id="BC045643">
    <property type="protein sequence ID" value="AAH45643.1"/>
    <property type="status" value="ALT_INIT"/>
    <property type="molecule type" value="mRNA"/>
</dbReference>
<dbReference type="EMBL" id="AL133575">
    <property type="protein sequence ID" value="CAB63722.1"/>
    <property type="molecule type" value="mRNA"/>
</dbReference>
<dbReference type="CCDS" id="CCDS47961.1">
    <molecule id="Q5VYM1-2"/>
</dbReference>
<dbReference type="CCDS" id="CCDS47962.1">
    <molecule id="Q5VYM1-3"/>
</dbReference>
<dbReference type="CCDS" id="CCDS6572.2">
    <molecule id="Q5VYM1-1"/>
</dbReference>
<dbReference type="PIR" id="T43478">
    <property type="entry name" value="T43478"/>
</dbReference>
<dbReference type="RefSeq" id="NP_001035500.1">
    <property type="nucleotide sequence ID" value="NM_001040410.2"/>
</dbReference>
<dbReference type="RefSeq" id="NP_001035501.1">
    <molecule id="Q5VYM1-3"/>
    <property type="nucleotide sequence ID" value="NM_001040411.3"/>
</dbReference>
<dbReference type="RefSeq" id="NP_001035502.1">
    <molecule id="Q5VYM1-2"/>
    <property type="nucleotide sequence ID" value="NM_001040412.3"/>
</dbReference>
<dbReference type="RefSeq" id="NP_001274320.1">
    <property type="nucleotide sequence ID" value="NM_001287391.1"/>
</dbReference>
<dbReference type="RefSeq" id="NP_976044.2">
    <molecule id="Q5VYM1-1"/>
    <property type="nucleotide sequence ID" value="NM_203299.4"/>
</dbReference>
<dbReference type="BioGRID" id="126520">
    <property type="interactions" value="4"/>
</dbReference>
<dbReference type="FunCoup" id="Q5VYM1">
    <property type="interactions" value="1"/>
</dbReference>
<dbReference type="IntAct" id="Q5VYM1">
    <property type="interactions" value="2"/>
</dbReference>
<dbReference type="STRING" id="9606.ENSP00000308279"/>
<dbReference type="GlyGen" id="Q5VYM1">
    <property type="glycosylation" value="1 site"/>
</dbReference>
<dbReference type="iPTMnet" id="Q5VYM1"/>
<dbReference type="PhosphoSitePlus" id="Q5VYM1"/>
<dbReference type="BioMuta" id="C9orf131"/>
<dbReference type="DMDM" id="212276515"/>
<dbReference type="jPOST" id="Q5VYM1"/>
<dbReference type="MassIVE" id="Q5VYM1"/>
<dbReference type="PaxDb" id="9606-ENSP00000308279"/>
<dbReference type="PeptideAtlas" id="Q5VYM1"/>
<dbReference type="ProteomicsDB" id="1470"/>
<dbReference type="ProteomicsDB" id="19128"/>
<dbReference type="ProteomicsDB" id="65638">
    <molecule id="Q5VYM1-1"/>
</dbReference>
<dbReference type="Antibodypedia" id="50361">
    <property type="antibodies" value="58 antibodies from 3 providers"/>
</dbReference>
<dbReference type="DNASU" id="138724"/>
<dbReference type="Ensembl" id="ENST00000312292.6">
    <molecule id="Q5VYM1-1"/>
    <property type="protein sequence ID" value="ENSP00000308279.5"/>
    <property type="gene ID" value="ENSG00000174038.13"/>
</dbReference>
<dbReference type="Ensembl" id="ENST00000354479.5">
    <molecule id="Q5VYM1-3"/>
    <property type="protein sequence ID" value="ENSP00000346472.5"/>
    <property type="gene ID" value="ENSG00000174038.13"/>
</dbReference>
<dbReference type="Ensembl" id="ENST00000421362.6">
    <molecule id="Q5VYM1-2"/>
    <property type="protein sequence ID" value="ENSP00000393683.2"/>
    <property type="gene ID" value="ENSG00000174038.13"/>
</dbReference>
<dbReference type="GeneID" id="138724"/>
<dbReference type="KEGG" id="hsa:138724"/>
<dbReference type="MANE-Select" id="ENST00000312292.6">
    <property type="protein sequence ID" value="ENSP00000308279.5"/>
    <property type="RefSeq nucleotide sequence ID" value="NM_203299.4"/>
    <property type="RefSeq protein sequence ID" value="NP_976044.2"/>
</dbReference>
<dbReference type="UCSC" id="uc003zvu.5">
    <molecule id="Q5VYM1-1"/>
    <property type="organism name" value="human"/>
</dbReference>
<dbReference type="AGR" id="HGNC:31418"/>
<dbReference type="CTD" id="138724"/>
<dbReference type="DisGeNET" id="138724"/>
<dbReference type="GeneCards" id="SPATA31G1"/>
<dbReference type="HGNC" id="HGNC:31418">
    <property type="gene designation" value="SPATA31G1"/>
</dbReference>
<dbReference type="HPA" id="ENSG00000174038">
    <property type="expression patterns" value="Tissue enriched (testis)"/>
</dbReference>
<dbReference type="neXtProt" id="NX_Q5VYM1"/>
<dbReference type="OpenTargets" id="ENSG00000174038"/>
<dbReference type="PharmGKB" id="PA145149697"/>
<dbReference type="VEuPathDB" id="HostDB:ENSG00000174038"/>
<dbReference type="eggNOG" id="ENOG502RJ23">
    <property type="taxonomic scope" value="Eukaryota"/>
</dbReference>
<dbReference type="GeneTree" id="ENSGT00390000000748"/>
<dbReference type="HOGENOM" id="CLU_010861_0_0_1"/>
<dbReference type="InParanoid" id="Q5VYM1"/>
<dbReference type="OMA" id="WHWSREL"/>
<dbReference type="OrthoDB" id="9451032at2759"/>
<dbReference type="PAN-GO" id="Q5VYM1">
    <property type="GO annotations" value="0 GO annotations based on evolutionary models"/>
</dbReference>
<dbReference type="PhylomeDB" id="Q5VYM1"/>
<dbReference type="TreeFam" id="TF337467"/>
<dbReference type="PathwayCommons" id="Q5VYM1"/>
<dbReference type="SignaLink" id="Q5VYM1"/>
<dbReference type="BioGRID-ORCS" id="138724">
    <property type="hits" value="46 hits in 1139 CRISPR screens"/>
</dbReference>
<dbReference type="GenomeRNAi" id="138724"/>
<dbReference type="Pharos" id="Q5VYM1">
    <property type="development level" value="Tdark"/>
</dbReference>
<dbReference type="PRO" id="PR:Q5VYM1"/>
<dbReference type="Proteomes" id="UP000005640">
    <property type="component" value="Chromosome 9"/>
</dbReference>
<dbReference type="RNAct" id="Q5VYM1">
    <property type="molecule type" value="protein"/>
</dbReference>
<dbReference type="Bgee" id="ENSG00000174038">
    <property type="expression patterns" value="Expressed in left testis and 143 other cell types or tissues"/>
</dbReference>
<dbReference type="ExpressionAtlas" id="Q5VYM1">
    <property type="expression patterns" value="baseline and differential"/>
</dbReference>
<dbReference type="InterPro" id="IPR026677">
    <property type="entry name" value="Spata31g1-like"/>
</dbReference>
<dbReference type="PANTHER" id="PTHR21777">
    <property type="entry name" value="RCG55159-LIKE"/>
    <property type="match status" value="1"/>
</dbReference>
<dbReference type="PANTHER" id="PTHR21777:SF0">
    <property type="entry name" value="RCG55159-LIKE"/>
    <property type="match status" value="1"/>
</dbReference>
<accession>Q5VYM1</accession>
<accession>A6NLE6</accession>
<accession>E9PB26</accession>
<accession>Q86XC6</accession>
<accession>Q9UF74</accession>
<protein>
    <recommendedName>
        <fullName evidence="5">Spermatogenesis-associated protein 31G1</fullName>
    </recommendedName>
</protein>